<gene>
    <name type="primary">dicer1</name>
</gene>
<comment type="function">
    <text evidence="1">Double-stranded RNA (dsRNA) endoribonuclease playing a central role in short dsRNA-mediated post-transcriptional gene silencing. Cleaves naturally occurring long dsRNAs and short hairpin pre-microRNAs (miRNA) into fragments of twenty-one to twenty-three nucleotides with 3' overhang of two nucleotides, producing respectively short interfering RNAs (siRNA) and mature microRNAs. SiRNAs and miRNAs serve as guide to direct the RNA-induced silencing complex (RISC) to complementary RNAs to degrade them or prevent their translation. Gene silencing mediated by siRNAs, also called RNA interference, controls the elimination of transcripts from mobile and repetitive DNA elements of the genome but also the degradation of exogenous RNA of viral origin for instance. The miRNA pathway on the other side is a mean to specifically regulate the expression of target genes (By similarity).</text>
</comment>
<comment type="catalytic activity">
    <reaction>
        <text>Endonucleolytic cleavage to 5'-phosphomonoester.</text>
        <dbReference type="EC" id="3.1.26.3"/>
    </reaction>
</comment>
<comment type="cofactor">
    <cofactor evidence="1">
        <name>Mg(2+)</name>
        <dbReference type="ChEBI" id="CHEBI:18420"/>
    </cofactor>
    <cofactor evidence="1">
        <name>Mn(2+)</name>
        <dbReference type="ChEBI" id="CHEBI:29035"/>
    </cofactor>
    <text evidence="1">Binds 2 magnesium or manganese ions per subunit.</text>
</comment>
<comment type="subunit">
    <text evidence="1">Component of the RISC loading complex (RLC), or micro-RNA (miRNA) loading complex (miRLC), which is composed of dicer1, ago2 and tarbp2; dicer1 and tarbp2 are required to process precursor miRNAs (pre-miRNAs) to mature miRNAs and then load them onto ago2. Note that the trimeric RLC/miRLC is also referred to as RISC (By similarity).</text>
</comment>
<comment type="subcellular location">
    <subcellularLocation>
        <location evidence="1">Cytoplasm</location>
    </subcellularLocation>
</comment>
<comment type="alternative products">
    <event type="alternative splicing"/>
    <isoform>
        <id>B3DLA6-1</id>
        <name>1</name>
        <sequence type="displayed"/>
    </isoform>
    <isoform>
        <id>B3DLA6-2</id>
        <name>2</name>
        <sequence type="described" ref="VSP_037298 VSP_037299"/>
    </isoform>
</comment>
<comment type="similarity">
    <text evidence="7">Belongs to the helicase family. Dicer subfamily.</text>
</comment>
<feature type="chain" id="PRO_0000373986" description="Endoribonuclease Dicer">
    <location>
        <begin position="1"/>
        <end position="1893"/>
    </location>
</feature>
<feature type="domain" description="Helicase ATP-binding" evidence="5">
    <location>
        <begin position="41"/>
        <end position="217"/>
    </location>
</feature>
<feature type="domain" description="Helicase C-terminal" evidence="6">
    <location>
        <begin position="424"/>
        <end position="593"/>
    </location>
</feature>
<feature type="domain" description="Dicer dsRNA-binding fold" evidence="7">
    <location>
        <begin position="621"/>
        <end position="713"/>
    </location>
</feature>
<feature type="domain" description="PAZ" evidence="2">
    <location>
        <begin position="886"/>
        <end position="1036"/>
    </location>
</feature>
<feature type="domain" description="RNase III 1" evidence="3">
    <location>
        <begin position="1249"/>
        <end position="1380"/>
    </location>
</feature>
<feature type="domain" description="RNase III 2" evidence="3">
    <location>
        <begin position="1637"/>
        <end position="1795"/>
    </location>
</feature>
<feature type="domain" description="DRBM" evidence="4">
    <location>
        <begin position="1820"/>
        <end position="1885"/>
    </location>
</feature>
<feature type="region of interest" description="Disordered" evidence="8">
    <location>
        <begin position="400"/>
        <end position="424"/>
    </location>
</feature>
<feature type="region of interest" description="Disordered" evidence="8">
    <location>
        <begin position="718"/>
        <end position="737"/>
    </location>
</feature>
<feature type="short sequence motif" description="DECH box">
    <location>
        <begin position="165"/>
        <end position="168"/>
    </location>
</feature>
<feature type="compositionally biased region" description="Acidic residues" evidence="8">
    <location>
        <begin position="404"/>
        <end position="416"/>
    </location>
</feature>
<feature type="binding site" evidence="5">
    <location>
        <begin position="54"/>
        <end position="61"/>
    </location>
    <ligand>
        <name>ATP</name>
        <dbReference type="ChEBI" id="CHEBI:30616"/>
    </ligand>
</feature>
<feature type="binding site" evidence="1">
    <location>
        <position position="1293"/>
    </location>
    <ligand>
        <name>Mg(2+)</name>
        <dbReference type="ChEBI" id="CHEBI:18420"/>
        <label>1</label>
    </ligand>
</feature>
<feature type="binding site" evidence="1">
    <location>
        <position position="1371"/>
    </location>
    <ligand>
        <name>Mg(2+)</name>
        <dbReference type="ChEBI" id="CHEBI:18420"/>
        <label>1</label>
    </ligand>
</feature>
<feature type="binding site" evidence="1">
    <location>
        <position position="1374"/>
    </location>
    <ligand>
        <name>Mg(2+)</name>
        <dbReference type="ChEBI" id="CHEBI:18420"/>
        <label>1</label>
    </ligand>
</feature>
<feature type="binding site" evidence="1">
    <location>
        <position position="1676"/>
    </location>
    <ligand>
        <name>Mg(2+)</name>
        <dbReference type="ChEBI" id="CHEBI:18420"/>
        <label>2</label>
    </ligand>
</feature>
<feature type="binding site" evidence="1">
    <location>
        <position position="1781"/>
    </location>
    <ligand>
        <name>Mg(2+)</name>
        <dbReference type="ChEBI" id="CHEBI:18420"/>
        <label>2</label>
    </ligand>
</feature>
<feature type="binding site" evidence="1">
    <location>
        <position position="1784"/>
    </location>
    <ligand>
        <name>Mg(2+)</name>
        <dbReference type="ChEBI" id="CHEBI:18420"/>
        <label>2</label>
    </ligand>
</feature>
<feature type="site" description="Important for activity" evidence="1">
    <location>
        <position position="1777"/>
    </location>
</feature>
<feature type="splice variant" id="VSP_037298" description="In isoform 2." evidence="9">
    <original>IPHFPVYT</original>
    <variation>VLQCTIKF</variation>
    <location>
        <begin position="804"/>
        <end position="811"/>
    </location>
</feature>
<feature type="splice variant" id="VSP_037299" description="In isoform 2." evidence="9">
    <location>
        <begin position="812"/>
        <end position="1893"/>
    </location>
</feature>
<protein>
    <recommendedName>
        <fullName>Endoribonuclease Dicer</fullName>
        <ecNumber>3.1.26.3</ecNumber>
    </recommendedName>
</protein>
<keyword id="KW-0025">Alternative splicing</keyword>
<keyword id="KW-0067">ATP-binding</keyword>
<keyword id="KW-0963">Cytoplasm</keyword>
<keyword id="KW-0255">Endonuclease</keyword>
<keyword id="KW-0347">Helicase</keyword>
<keyword id="KW-0378">Hydrolase</keyword>
<keyword id="KW-0460">Magnesium</keyword>
<keyword id="KW-0464">Manganese</keyword>
<keyword id="KW-0479">Metal-binding</keyword>
<keyword id="KW-0540">Nuclease</keyword>
<keyword id="KW-0547">Nucleotide-binding</keyword>
<keyword id="KW-0597">Phosphoprotein</keyword>
<keyword id="KW-1185">Reference proteome</keyword>
<keyword id="KW-0677">Repeat</keyword>
<keyword id="KW-0694">RNA-binding</keyword>
<keyword id="KW-0943">RNA-mediated gene silencing</keyword>
<reference key="1">
    <citation type="submission" date="2007-12" db="EMBL/GenBank/DDBJ databases">
        <title>Activation of miRNA processing during Xenopus oocyte maturation.</title>
        <authorList>
            <person name="Garcia M.A."/>
            <person name="Kidwell M.A."/>
            <person name="Heintzman S.E."/>
            <person name="Wormington M."/>
        </authorList>
    </citation>
    <scope>NUCLEOTIDE SEQUENCE [MRNA] (ISOFORM 1)</scope>
</reference>
<reference key="2">
    <citation type="submission" date="2008-06" db="EMBL/GenBank/DDBJ databases">
        <authorList>
            <consortium name="NIH - Xenopus Gene Collection (XGC) project"/>
        </authorList>
    </citation>
    <scope>NUCLEOTIDE SEQUENCE [LARGE SCALE MRNA] (ISOFORM 2)</scope>
    <source>
        <strain>N6</strain>
        <tissue>Intestine</tissue>
    </source>
</reference>
<proteinExistence type="evidence at transcript level"/>
<dbReference type="EC" id="3.1.26.3"/>
<dbReference type="EMBL" id="EU338242">
    <property type="protein sequence ID" value="ACA52289.1"/>
    <property type="molecule type" value="mRNA"/>
</dbReference>
<dbReference type="EMBL" id="BC167373">
    <property type="protein sequence ID" value="AAI67373.1"/>
    <property type="molecule type" value="mRNA"/>
</dbReference>
<dbReference type="RefSeq" id="NP_001123390.2">
    <molecule id="B3DLA6-1"/>
    <property type="nucleotide sequence ID" value="NM_001129918.2"/>
</dbReference>
<dbReference type="SMR" id="B3DLA6"/>
<dbReference type="FunCoup" id="B3DLA6">
    <property type="interactions" value="1981"/>
</dbReference>
<dbReference type="STRING" id="8364.ENSXETP00000047771"/>
<dbReference type="PaxDb" id="8364-ENSXETP00000050382"/>
<dbReference type="GeneID" id="100170154"/>
<dbReference type="KEGG" id="xtr:100170154"/>
<dbReference type="AGR" id="Xenbase:XB-GENE-491114"/>
<dbReference type="CTD" id="23405"/>
<dbReference type="Xenbase" id="XB-GENE-491114">
    <property type="gene designation" value="dicer1"/>
</dbReference>
<dbReference type="eggNOG" id="KOG0701">
    <property type="taxonomic scope" value="Eukaryota"/>
</dbReference>
<dbReference type="InParanoid" id="B3DLA6"/>
<dbReference type="OMA" id="CGFHKYF"/>
<dbReference type="OrthoDB" id="2392202at2759"/>
<dbReference type="Reactome" id="R-XTR-203927">
    <property type="pathway name" value="MicroRNA (miRNA) biogenesis"/>
</dbReference>
<dbReference type="Reactome" id="R-XTR-426486">
    <property type="pathway name" value="Small interfering RNA (siRNA) biogenesis"/>
</dbReference>
<dbReference type="Proteomes" id="UP000008143">
    <property type="component" value="Chromosome 8"/>
</dbReference>
<dbReference type="Bgee" id="ENSXETG00000023315">
    <property type="expression patterns" value="Expressed in egg cell and 14 other cell types or tissues"/>
</dbReference>
<dbReference type="GO" id="GO:0005737">
    <property type="term" value="C:cytoplasm"/>
    <property type="evidence" value="ECO:0007669"/>
    <property type="project" value="UniProtKB-SubCell"/>
</dbReference>
<dbReference type="GO" id="GO:0016442">
    <property type="term" value="C:RISC complex"/>
    <property type="evidence" value="ECO:0000250"/>
    <property type="project" value="UniProtKB"/>
</dbReference>
<dbReference type="GO" id="GO:0070578">
    <property type="term" value="C:RISC-loading complex"/>
    <property type="evidence" value="ECO:0000250"/>
    <property type="project" value="UniProtKB"/>
</dbReference>
<dbReference type="GO" id="GO:0005524">
    <property type="term" value="F:ATP binding"/>
    <property type="evidence" value="ECO:0007669"/>
    <property type="project" value="UniProtKB-KW"/>
</dbReference>
<dbReference type="GO" id="GO:0004386">
    <property type="term" value="F:helicase activity"/>
    <property type="evidence" value="ECO:0007669"/>
    <property type="project" value="UniProtKB-KW"/>
</dbReference>
<dbReference type="GO" id="GO:0046872">
    <property type="term" value="F:metal ion binding"/>
    <property type="evidence" value="ECO:0007669"/>
    <property type="project" value="UniProtKB-KW"/>
</dbReference>
<dbReference type="GO" id="GO:0004525">
    <property type="term" value="F:ribonuclease III activity"/>
    <property type="evidence" value="ECO:0007669"/>
    <property type="project" value="UniProtKB-EC"/>
</dbReference>
<dbReference type="GO" id="GO:0003723">
    <property type="term" value="F:RNA binding"/>
    <property type="evidence" value="ECO:0007669"/>
    <property type="project" value="UniProtKB-KW"/>
</dbReference>
<dbReference type="GO" id="GO:0098795">
    <property type="term" value="P:global gene silencing by mRNA cleavage"/>
    <property type="evidence" value="ECO:0000250"/>
    <property type="project" value="UniProtKB"/>
</dbReference>
<dbReference type="GO" id="GO:0031054">
    <property type="term" value="P:pre-miRNA processing"/>
    <property type="evidence" value="ECO:0000250"/>
    <property type="project" value="UniProtKB"/>
</dbReference>
<dbReference type="GO" id="GO:0030422">
    <property type="term" value="P:siRNA processing"/>
    <property type="evidence" value="ECO:0000250"/>
    <property type="project" value="UniProtKB"/>
</dbReference>
<dbReference type="CDD" id="cd18034">
    <property type="entry name" value="DEXHc_dicer"/>
    <property type="match status" value="1"/>
</dbReference>
<dbReference type="CDD" id="cd15903">
    <property type="entry name" value="Dicer_PBD"/>
    <property type="match status" value="1"/>
</dbReference>
<dbReference type="CDD" id="cd10843">
    <property type="entry name" value="DSRM_DICER"/>
    <property type="match status" value="1"/>
</dbReference>
<dbReference type="CDD" id="cd02843">
    <property type="entry name" value="PAZ_dicer_like"/>
    <property type="match status" value="1"/>
</dbReference>
<dbReference type="CDD" id="cd00593">
    <property type="entry name" value="RIBOc"/>
    <property type="match status" value="2"/>
</dbReference>
<dbReference type="CDD" id="cd18802">
    <property type="entry name" value="SF2_C_dicer"/>
    <property type="match status" value="1"/>
</dbReference>
<dbReference type="FunFam" id="1.10.1520.10:FF:000023">
    <property type="entry name" value="Endoribonuclease dcr-1"/>
    <property type="match status" value="1"/>
</dbReference>
<dbReference type="FunFam" id="3.40.50.300:FF:000628">
    <property type="entry name" value="Endoribonuclease Dicer"/>
    <property type="match status" value="1"/>
</dbReference>
<dbReference type="FunFam" id="3.30.160.20:FF:000015">
    <property type="entry name" value="endoribonuclease Dicer"/>
    <property type="match status" value="1"/>
</dbReference>
<dbReference type="FunFam" id="3.30.160.380:FF:000002">
    <property type="entry name" value="Endoribonuclease Dicer isoform 1"/>
    <property type="match status" value="1"/>
</dbReference>
<dbReference type="FunFam" id="3.40.50.300:FF:000588">
    <property type="entry name" value="Endoribonuclease Dicer isoform 1"/>
    <property type="match status" value="1"/>
</dbReference>
<dbReference type="FunFam" id="2.170.260.10:FF:000002">
    <property type="entry name" value="Putative Endoribonuclease Dicer"/>
    <property type="match status" value="1"/>
</dbReference>
<dbReference type="FunFam" id="1.10.1520.10:FF:000005">
    <property type="entry name" value="Putative endoribonuclease dicer"/>
    <property type="match status" value="1"/>
</dbReference>
<dbReference type="Gene3D" id="3.30.160.20">
    <property type="match status" value="1"/>
</dbReference>
<dbReference type="Gene3D" id="3.30.160.380">
    <property type="entry name" value="Dicer dimerisation domain"/>
    <property type="match status" value="1"/>
</dbReference>
<dbReference type="Gene3D" id="3.40.50.300">
    <property type="entry name" value="P-loop containing nucleotide triphosphate hydrolases"/>
    <property type="match status" value="2"/>
</dbReference>
<dbReference type="Gene3D" id="2.170.260.10">
    <property type="entry name" value="paz domain"/>
    <property type="match status" value="1"/>
</dbReference>
<dbReference type="Gene3D" id="1.10.1520.10">
    <property type="entry name" value="Ribonuclease III domain"/>
    <property type="match status" value="2"/>
</dbReference>
<dbReference type="InterPro" id="IPR011545">
    <property type="entry name" value="DEAD/DEAH_box_helicase_dom"/>
</dbReference>
<dbReference type="InterPro" id="IPR038248">
    <property type="entry name" value="Dicer_dimer_sf"/>
</dbReference>
<dbReference type="InterPro" id="IPR005034">
    <property type="entry name" value="Dicer_dimerisation_dom"/>
</dbReference>
<dbReference type="InterPro" id="IPR044441">
    <property type="entry name" value="DICER_DSRM"/>
</dbReference>
<dbReference type="InterPro" id="IPR048513">
    <property type="entry name" value="Dicer_PBD"/>
</dbReference>
<dbReference type="InterPro" id="IPR048512">
    <property type="entry name" value="Dicer_platform"/>
</dbReference>
<dbReference type="InterPro" id="IPR014720">
    <property type="entry name" value="dsRBD_dom"/>
</dbReference>
<dbReference type="InterPro" id="IPR014001">
    <property type="entry name" value="Helicase_ATP-bd"/>
</dbReference>
<dbReference type="InterPro" id="IPR001650">
    <property type="entry name" value="Helicase_C-like"/>
</dbReference>
<dbReference type="InterPro" id="IPR027417">
    <property type="entry name" value="P-loop_NTPase"/>
</dbReference>
<dbReference type="InterPro" id="IPR003100">
    <property type="entry name" value="PAZ_dom"/>
</dbReference>
<dbReference type="InterPro" id="IPR036085">
    <property type="entry name" value="PAZ_dom_sf"/>
</dbReference>
<dbReference type="InterPro" id="IPR000999">
    <property type="entry name" value="RNase_III_dom"/>
</dbReference>
<dbReference type="InterPro" id="IPR036389">
    <property type="entry name" value="RNase_III_sf"/>
</dbReference>
<dbReference type="PANTHER" id="PTHR14950">
    <property type="entry name" value="DICER-RELATED"/>
    <property type="match status" value="1"/>
</dbReference>
<dbReference type="PANTHER" id="PTHR14950:SF37">
    <property type="entry name" value="ENDORIBONUCLEASE DICER"/>
    <property type="match status" value="1"/>
</dbReference>
<dbReference type="Pfam" id="PF00270">
    <property type="entry name" value="DEAD"/>
    <property type="match status" value="1"/>
</dbReference>
<dbReference type="Pfam" id="PF03368">
    <property type="entry name" value="Dicer_dimer"/>
    <property type="match status" value="1"/>
</dbReference>
<dbReference type="Pfam" id="PF20932">
    <property type="entry name" value="Dicer_dsRBD"/>
    <property type="match status" value="1"/>
</dbReference>
<dbReference type="Pfam" id="PF20930">
    <property type="entry name" value="Dicer_PBD"/>
    <property type="match status" value="1"/>
</dbReference>
<dbReference type="Pfam" id="PF20931">
    <property type="entry name" value="Dicer_platform"/>
    <property type="match status" value="1"/>
</dbReference>
<dbReference type="Pfam" id="PF00271">
    <property type="entry name" value="Helicase_C"/>
    <property type="match status" value="1"/>
</dbReference>
<dbReference type="Pfam" id="PF02170">
    <property type="entry name" value="PAZ"/>
    <property type="match status" value="1"/>
</dbReference>
<dbReference type="Pfam" id="PF00636">
    <property type="entry name" value="Ribonuclease_3"/>
    <property type="match status" value="2"/>
</dbReference>
<dbReference type="SMART" id="SM00487">
    <property type="entry name" value="DEXDc"/>
    <property type="match status" value="1"/>
</dbReference>
<dbReference type="SMART" id="SM00358">
    <property type="entry name" value="DSRM"/>
    <property type="match status" value="1"/>
</dbReference>
<dbReference type="SMART" id="SM00490">
    <property type="entry name" value="HELICc"/>
    <property type="match status" value="1"/>
</dbReference>
<dbReference type="SMART" id="SM00949">
    <property type="entry name" value="PAZ"/>
    <property type="match status" value="1"/>
</dbReference>
<dbReference type="SMART" id="SM00535">
    <property type="entry name" value="RIBOc"/>
    <property type="match status" value="2"/>
</dbReference>
<dbReference type="SUPFAM" id="SSF54768">
    <property type="entry name" value="dsRNA-binding domain-like"/>
    <property type="match status" value="1"/>
</dbReference>
<dbReference type="SUPFAM" id="SSF52540">
    <property type="entry name" value="P-loop containing nucleoside triphosphate hydrolases"/>
    <property type="match status" value="1"/>
</dbReference>
<dbReference type="SUPFAM" id="SSF101690">
    <property type="entry name" value="PAZ domain"/>
    <property type="match status" value="1"/>
</dbReference>
<dbReference type="SUPFAM" id="SSF69065">
    <property type="entry name" value="RNase III domain-like"/>
    <property type="match status" value="2"/>
</dbReference>
<dbReference type="PROSITE" id="PS51327">
    <property type="entry name" value="DICER_DSRBF"/>
    <property type="match status" value="1"/>
</dbReference>
<dbReference type="PROSITE" id="PS50137">
    <property type="entry name" value="DS_RBD"/>
    <property type="match status" value="1"/>
</dbReference>
<dbReference type="PROSITE" id="PS51192">
    <property type="entry name" value="HELICASE_ATP_BIND_1"/>
    <property type="match status" value="1"/>
</dbReference>
<dbReference type="PROSITE" id="PS51194">
    <property type="entry name" value="HELICASE_CTER"/>
    <property type="match status" value="1"/>
</dbReference>
<dbReference type="PROSITE" id="PS50821">
    <property type="entry name" value="PAZ"/>
    <property type="match status" value="1"/>
</dbReference>
<dbReference type="PROSITE" id="PS00517">
    <property type="entry name" value="RNASE_3_1"/>
    <property type="match status" value="1"/>
</dbReference>
<dbReference type="PROSITE" id="PS50142">
    <property type="entry name" value="RNASE_3_2"/>
    <property type="match status" value="2"/>
</dbReference>
<sequence length="1893" mass="215398">MAGLQLMTPASSPMGPFFGLPWQQEAIHDNIYTPRKYQVELLEAALDHNTIVCLNSGSGKTFIAVLLSKELSYQIRGDFSKNTKRTVFLVNSEKQVSQQVSAVRTHTDLKVGEYSDQEKTQCWAKERWYLEFETHQVLVMTCHIFLNVLKSGNVSLSNINLLVFDECHLAIQDHPYREIMKICESCQPCPRILGLTASILNGKCDPRDLEEKIQKLEEILRSNAETATDLVVLDRYASQPCEIVLDCGPYIDKSGLYQRLLNELDEALNFLIDCNISTHSKERDSTLISKQILSDCQTVLLVLGPWCADKVAGMMVRELQKYIKHEQEELHRKFLLFTDTILRKIHALCEEHFSPASLDMKFVTPKVIKLLEILRKYKPYERQQFESVEWYNNRNQDNYVSWSDSEDDDDEDEEIEEKEKTETSFPSPFTNILCGIIFVERRYTAVVLNRLIKEAGKQDPELAYISSNFITGHGIGKNQPRNKQMEVEFRKQEEVLRKFRAHETNLLIATSIVEEGVDIPKCNLVVRFDLPSEYRSYVQSKGRARAPISNYIMLADSDKIKAFEEDLKTYKAIEKILRNKCSKSIDCGNTESEPIVDDDEIFPPYVLRQDDGSPRVTINTAIGHINRYCARLPSDPFTHLAPKCKTREFPDGLYRSTLYLPINSPLRAPIVGPPMNCGRLADRAVALICCKKLHEIGELDDHLMPVGKETVKYEEELDLHDEEETSVPGRPGSTKRRQCYPKAIPECLRNSYPKPGQPCYLYVIGMVLTTPLPDELNFRRRKLYPPEDTTRCFGILTAKPIPQIPHFPVYTRSGEVTISIELKKSGFTLNLEQLELITRLHQYIFSHILRLEKPALEFKPTVADCAYCVLPLNVVNDSGTLDIDFKFVEDIEKSEARTGIPNTQYSAESPFIFKLEDYQDAVIIPRQVIYRNFDQPHRFYVADVYTDLTPLSKFPSPEYETFAEYYKTKYNLDLTNLNQPLLDVDHTSSRLNLLTPRHLNQKGKALPLSSAEKRKAKWESLQNKQILVPELCAIHPVPASLWRKAVCLPSILYRLHCLLTAEELRAQTAIDAGVGVKSLPDDFRYPNLDFGWKRSIDSKTFISNQSSSSVESESDCRLNKTTAPDSAASSAANSVIYMQINDQMSVNCTPPCQKSLSHLQTVCFSDDYKAINGISCNGLTNGDWEAESAACFQKDERITCKQEIPEKSTSFHVQNLPKENQPILKECTLSNSDGNVSKPTSDECPSTCTSDMHYDSGLSNRHSSKTLGPNPGLILQALTLSNASDGFNLERLEMLGDSFLKHAITTYLFCTYPDAHEGRLSYMRSKKVSNCNLYRLGKKKGSPSRMVVSIFDPPVNWLPPGYIVNQDKNSDKWESNETSGEDVMVNGKIDEDFDDEEDEDLMWRNPKEETDFDDDFLEYDQEHIKFIDSMLMGSGAFVKKIPLSSFAPPDQNYEWRAPKKPPLESSQFPCDFDDFDYSSWDAMCYLDPSKAVEEDDFVVGFWNPSEENCGADAGKQSISYDLHTEQCIADKSIADCVEALLGCYLTSCGERAAQLFLCSLGLKVLPEVRKLVTNTNVISASSSYQNSTRDNCTLTARTNTDLSSCKGIDYGYLKIPPRCMFEHPDAEKTLDHLISGFENFEKKINYPFKNKAYLLQAFTHASYHYNTITDCYQRLEFLGDAILDYLITKHLYEDPRQHSPGVLTDLRSALVNNTIFASLAVKYDYHKYFKAISPELFHVIDDFVQFQLEKNEMQGMDSELRRSEEDEEKEEDIEVPKAMGDIFESLAGAIYMDSGMSLETVWHVYYPMMQPLIEKFSANVPRSPVRELLEMEPETAKFSPAERTYDGKVRVTVEVVGKGKFKGVGRSYRIAKSAAARRALRSLKANQSQVPNS</sequence>
<name>DICER_XENTR</name>
<organism>
    <name type="scientific">Xenopus tropicalis</name>
    <name type="common">Western clawed frog</name>
    <name type="synonym">Silurana tropicalis</name>
    <dbReference type="NCBI Taxonomy" id="8364"/>
    <lineage>
        <taxon>Eukaryota</taxon>
        <taxon>Metazoa</taxon>
        <taxon>Chordata</taxon>
        <taxon>Craniata</taxon>
        <taxon>Vertebrata</taxon>
        <taxon>Euteleostomi</taxon>
        <taxon>Amphibia</taxon>
        <taxon>Batrachia</taxon>
        <taxon>Anura</taxon>
        <taxon>Pipoidea</taxon>
        <taxon>Pipidae</taxon>
        <taxon>Xenopodinae</taxon>
        <taxon>Xenopus</taxon>
        <taxon>Silurana</taxon>
    </lineage>
</organism>
<evidence type="ECO:0000250" key="1"/>
<evidence type="ECO:0000255" key="2">
    <source>
        <dbReference type="PROSITE-ProRule" id="PRU00142"/>
    </source>
</evidence>
<evidence type="ECO:0000255" key="3">
    <source>
        <dbReference type="PROSITE-ProRule" id="PRU00177"/>
    </source>
</evidence>
<evidence type="ECO:0000255" key="4">
    <source>
        <dbReference type="PROSITE-ProRule" id="PRU00266"/>
    </source>
</evidence>
<evidence type="ECO:0000255" key="5">
    <source>
        <dbReference type="PROSITE-ProRule" id="PRU00541"/>
    </source>
</evidence>
<evidence type="ECO:0000255" key="6">
    <source>
        <dbReference type="PROSITE-ProRule" id="PRU00542"/>
    </source>
</evidence>
<evidence type="ECO:0000255" key="7">
    <source>
        <dbReference type="PROSITE-ProRule" id="PRU00657"/>
    </source>
</evidence>
<evidence type="ECO:0000256" key="8">
    <source>
        <dbReference type="SAM" id="MobiDB-lite"/>
    </source>
</evidence>
<evidence type="ECO:0000303" key="9">
    <source ref="2"/>
</evidence>
<accession>B3DLA6</accession>
<accession>C0IN01</accession>